<dbReference type="EMBL" id="Y18134">
    <property type="protein sequence ID" value="CAA77061.1"/>
    <property type="molecule type" value="Genomic_DNA"/>
</dbReference>
<dbReference type="PIR" id="T11546">
    <property type="entry name" value="T11546"/>
</dbReference>
<dbReference type="RefSeq" id="NP_008535.1">
    <property type="nucleotide sequence ID" value="NC_002012.1"/>
</dbReference>
<dbReference type="SMR" id="Q9ZZ42"/>
<dbReference type="GeneID" id="808378"/>
<dbReference type="CTD" id="4519"/>
<dbReference type="GO" id="GO:0005743">
    <property type="term" value="C:mitochondrial inner membrane"/>
    <property type="evidence" value="ECO:0007669"/>
    <property type="project" value="UniProtKB-SubCell"/>
</dbReference>
<dbReference type="GO" id="GO:0045275">
    <property type="term" value="C:respiratory chain complex III"/>
    <property type="evidence" value="ECO:0007669"/>
    <property type="project" value="InterPro"/>
</dbReference>
<dbReference type="GO" id="GO:0046872">
    <property type="term" value="F:metal ion binding"/>
    <property type="evidence" value="ECO:0007669"/>
    <property type="project" value="UniProtKB-KW"/>
</dbReference>
<dbReference type="GO" id="GO:0008121">
    <property type="term" value="F:ubiquinol-cytochrome-c reductase activity"/>
    <property type="evidence" value="ECO:0007669"/>
    <property type="project" value="InterPro"/>
</dbReference>
<dbReference type="GO" id="GO:0006122">
    <property type="term" value="P:mitochondrial electron transport, ubiquinol to cytochrome c"/>
    <property type="evidence" value="ECO:0007669"/>
    <property type="project" value="TreeGrafter"/>
</dbReference>
<dbReference type="CDD" id="cd00290">
    <property type="entry name" value="cytochrome_b_C"/>
    <property type="match status" value="1"/>
</dbReference>
<dbReference type="CDD" id="cd00284">
    <property type="entry name" value="Cytochrome_b_N"/>
    <property type="match status" value="1"/>
</dbReference>
<dbReference type="FunFam" id="1.20.810.10:FF:000002">
    <property type="entry name" value="Cytochrome b"/>
    <property type="match status" value="1"/>
</dbReference>
<dbReference type="Gene3D" id="1.20.810.10">
    <property type="entry name" value="Cytochrome Bc1 Complex, Chain C"/>
    <property type="match status" value="1"/>
</dbReference>
<dbReference type="InterPro" id="IPR005798">
    <property type="entry name" value="Cyt_b/b6_C"/>
</dbReference>
<dbReference type="InterPro" id="IPR036150">
    <property type="entry name" value="Cyt_b/b6_C_sf"/>
</dbReference>
<dbReference type="InterPro" id="IPR005797">
    <property type="entry name" value="Cyt_b/b6_N"/>
</dbReference>
<dbReference type="InterPro" id="IPR027387">
    <property type="entry name" value="Cytb/b6-like_sf"/>
</dbReference>
<dbReference type="InterPro" id="IPR030689">
    <property type="entry name" value="Cytochrome_b"/>
</dbReference>
<dbReference type="InterPro" id="IPR048260">
    <property type="entry name" value="Cytochrome_b_C_euk/bac"/>
</dbReference>
<dbReference type="InterPro" id="IPR048259">
    <property type="entry name" value="Cytochrome_b_N_euk/bac"/>
</dbReference>
<dbReference type="InterPro" id="IPR016174">
    <property type="entry name" value="Di-haem_cyt_TM"/>
</dbReference>
<dbReference type="PANTHER" id="PTHR19271">
    <property type="entry name" value="CYTOCHROME B"/>
    <property type="match status" value="1"/>
</dbReference>
<dbReference type="PANTHER" id="PTHR19271:SF16">
    <property type="entry name" value="CYTOCHROME B"/>
    <property type="match status" value="1"/>
</dbReference>
<dbReference type="Pfam" id="PF00032">
    <property type="entry name" value="Cytochrom_B_C"/>
    <property type="match status" value="1"/>
</dbReference>
<dbReference type="Pfam" id="PF00033">
    <property type="entry name" value="Cytochrome_B"/>
    <property type="match status" value="1"/>
</dbReference>
<dbReference type="PIRSF" id="PIRSF038885">
    <property type="entry name" value="COB"/>
    <property type="match status" value="1"/>
</dbReference>
<dbReference type="SUPFAM" id="SSF81648">
    <property type="entry name" value="a domain/subunit of cytochrome bc1 complex (Ubiquinol-cytochrome c reductase)"/>
    <property type="match status" value="1"/>
</dbReference>
<dbReference type="SUPFAM" id="SSF81342">
    <property type="entry name" value="Transmembrane di-heme cytochromes"/>
    <property type="match status" value="1"/>
</dbReference>
<dbReference type="PROSITE" id="PS51003">
    <property type="entry name" value="CYTB_CTER"/>
    <property type="match status" value="1"/>
</dbReference>
<dbReference type="PROSITE" id="PS51002">
    <property type="entry name" value="CYTB_NTER"/>
    <property type="match status" value="1"/>
</dbReference>
<sequence length="381" mass="43261">MTTNIRKTHPLIKIVNHALVDLPSPSNISIWWNFGSLLGLCLIIQILTGLFLAMHYTADISTAFSSVVHICRDVNYGWLIRNIHANGASLFFICVYLHIARGLYYGSYLFKEAWNIGVILLFLLMATAFVGYVLPWGQMSFWGATVITNLLSAFPYIGDMLVQWIWGGFSIDNATLTRFFAFHFLLPFLIVGLTLIHLLFLHETGSNNPMGLNSDMDKISFHPYFSYKDLLGFFLMIILLALLALFLPNLLGDAENFIPANPLVTPPHIKPEWYFLFAYAILRSIPNKLGGVLALLFSIFILMLIPMLHTSKQRSNIFRPMTQFLFWTLVANAIILTWIGGQPVEQPFILVGQIASVTYFSLFLIIIPLTGWWENKMLNLN</sequence>
<evidence type="ECO:0000250" key="1"/>
<evidence type="ECO:0000250" key="2">
    <source>
        <dbReference type="UniProtKB" id="P00157"/>
    </source>
</evidence>
<evidence type="ECO:0000255" key="3">
    <source>
        <dbReference type="PROSITE-ProRule" id="PRU00967"/>
    </source>
</evidence>
<evidence type="ECO:0000255" key="4">
    <source>
        <dbReference type="PROSITE-ProRule" id="PRU00968"/>
    </source>
</evidence>
<feature type="chain" id="PRO_0000061610" description="Cytochrome b">
    <location>
        <begin position="1"/>
        <end position="381"/>
    </location>
</feature>
<feature type="transmembrane region" description="Helical" evidence="2">
    <location>
        <begin position="34"/>
        <end position="54"/>
    </location>
</feature>
<feature type="transmembrane region" description="Helical" evidence="2">
    <location>
        <begin position="78"/>
        <end position="99"/>
    </location>
</feature>
<feature type="transmembrane region" description="Helical" evidence="2">
    <location>
        <begin position="114"/>
        <end position="134"/>
    </location>
</feature>
<feature type="transmembrane region" description="Helical" evidence="2">
    <location>
        <begin position="179"/>
        <end position="199"/>
    </location>
</feature>
<feature type="transmembrane region" description="Helical" evidence="2">
    <location>
        <begin position="227"/>
        <end position="247"/>
    </location>
</feature>
<feature type="transmembrane region" description="Helical" evidence="2">
    <location>
        <begin position="289"/>
        <end position="309"/>
    </location>
</feature>
<feature type="transmembrane region" description="Helical" evidence="2">
    <location>
        <begin position="321"/>
        <end position="341"/>
    </location>
</feature>
<feature type="transmembrane region" description="Helical" evidence="2">
    <location>
        <begin position="348"/>
        <end position="368"/>
    </location>
</feature>
<feature type="binding site" description="axial binding residue" evidence="2">
    <location>
        <position position="84"/>
    </location>
    <ligand>
        <name>heme b</name>
        <dbReference type="ChEBI" id="CHEBI:60344"/>
        <label>b562</label>
    </ligand>
    <ligandPart>
        <name>Fe</name>
        <dbReference type="ChEBI" id="CHEBI:18248"/>
    </ligandPart>
</feature>
<feature type="binding site" description="axial binding residue" evidence="2">
    <location>
        <position position="98"/>
    </location>
    <ligand>
        <name>heme b</name>
        <dbReference type="ChEBI" id="CHEBI:60344"/>
        <label>b566</label>
    </ligand>
    <ligandPart>
        <name>Fe</name>
        <dbReference type="ChEBI" id="CHEBI:18248"/>
    </ligandPart>
</feature>
<feature type="binding site" description="axial binding residue" evidence="2">
    <location>
        <position position="183"/>
    </location>
    <ligand>
        <name>heme b</name>
        <dbReference type="ChEBI" id="CHEBI:60344"/>
        <label>b562</label>
    </ligand>
    <ligandPart>
        <name>Fe</name>
        <dbReference type="ChEBI" id="CHEBI:18248"/>
    </ligandPart>
</feature>
<feature type="binding site" description="axial binding residue" evidence="2">
    <location>
        <position position="197"/>
    </location>
    <ligand>
        <name>heme b</name>
        <dbReference type="ChEBI" id="CHEBI:60344"/>
        <label>b566</label>
    </ligand>
    <ligandPart>
        <name>Fe</name>
        <dbReference type="ChEBI" id="CHEBI:18248"/>
    </ligandPart>
</feature>
<feature type="binding site" evidence="2">
    <location>
        <position position="202"/>
    </location>
    <ligand>
        <name>a ubiquinone</name>
        <dbReference type="ChEBI" id="CHEBI:16389"/>
    </ligand>
</feature>
<geneLocation type="mitochondrion"/>
<organism>
    <name type="scientific">Squalus acanthias</name>
    <name type="common">Spiny dogfish</name>
    <dbReference type="NCBI Taxonomy" id="7797"/>
    <lineage>
        <taxon>Eukaryota</taxon>
        <taxon>Metazoa</taxon>
        <taxon>Chordata</taxon>
        <taxon>Craniata</taxon>
        <taxon>Vertebrata</taxon>
        <taxon>Chondrichthyes</taxon>
        <taxon>Elasmobranchii</taxon>
        <taxon>Squalomorphii</taxon>
        <taxon>Squaliformes</taxon>
        <taxon>Squalidae</taxon>
        <taxon>Squalus</taxon>
    </lineage>
</organism>
<protein>
    <recommendedName>
        <fullName>Cytochrome b</fullName>
    </recommendedName>
    <alternativeName>
        <fullName>Complex III subunit 3</fullName>
    </alternativeName>
    <alternativeName>
        <fullName>Complex III subunit III</fullName>
    </alternativeName>
    <alternativeName>
        <fullName>Cytochrome b-c1 complex subunit 3</fullName>
    </alternativeName>
    <alternativeName>
        <fullName>Ubiquinol-cytochrome-c reductase complex cytochrome b subunit</fullName>
    </alternativeName>
</protein>
<gene>
    <name type="primary">mt-cyb</name>
    <name type="synonym">cob</name>
    <name type="synonym">cytb</name>
    <name type="synonym">mtcyb</name>
</gene>
<proteinExistence type="inferred from homology"/>
<accession>Q9ZZ42</accession>
<reference key="1">
    <citation type="journal article" date="1999" name="J. Mol. Evol.">
        <title>Phylogenetic studies of complete mitochondrial DNA molecules place cartilaginous fishes within the tree of bony fishes.</title>
        <authorList>
            <person name="Rasmussen A.S."/>
            <person name="Arnason U."/>
        </authorList>
    </citation>
    <scope>NUCLEOTIDE SEQUENCE [GENOMIC DNA]</scope>
</reference>
<comment type="function">
    <text evidence="2">Component of the ubiquinol-cytochrome c reductase complex (complex III or cytochrome b-c1 complex) that is part of the mitochondrial respiratory chain. The b-c1 complex mediates electron transfer from ubiquinol to cytochrome c. Contributes to the generation of a proton gradient across the mitochondrial membrane that is then used for ATP synthesis.</text>
</comment>
<comment type="cofactor">
    <cofactor evidence="2">
        <name>heme b</name>
        <dbReference type="ChEBI" id="CHEBI:60344"/>
    </cofactor>
    <text evidence="2">Binds 2 heme b groups non-covalently.</text>
</comment>
<comment type="subunit">
    <text evidence="2">The cytochrome bc1 complex contains 3 respiratory subunits (MT-CYB, CYC1 and UQCRFS1), 2 core proteins (UQCRC1 and UQCRC2) and probably 6 low-molecular weight proteins.</text>
</comment>
<comment type="subcellular location">
    <subcellularLocation>
        <location evidence="2">Mitochondrion inner membrane</location>
        <topology evidence="2">Multi-pass membrane protein</topology>
    </subcellularLocation>
</comment>
<comment type="miscellaneous">
    <text evidence="1">Heme 1 (or BL or b562) is low-potential and absorbs at about 562 nm, and heme 2 (or BH or b566) is high-potential and absorbs at about 566 nm.</text>
</comment>
<comment type="similarity">
    <text evidence="3 4">Belongs to the cytochrome b family.</text>
</comment>
<comment type="caution">
    <text evidence="2">The full-length protein contains only eight transmembrane helices, not nine as predicted by bioinformatics tools.</text>
</comment>
<name>CYB_SQUAC</name>
<keyword id="KW-0249">Electron transport</keyword>
<keyword id="KW-0349">Heme</keyword>
<keyword id="KW-0408">Iron</keyword>
<keyword id="KW-0472">Membrane</keyword>
<keyword id="KW-0479">Metal-binding</keyword>
<keyword id="KW-0496">Mitochondrion</keyword>
<keyword id="KW-0999">Mitochondrion inner membrane</keyword>
<keyword id="KW-0679">Respiratory chain</keyword>
<keyword id="KW-0812">Transmembrane</keyword>
<keyword id="KW-1133">Transmembrane helix</keyword>
<keyword id="KW-0813">Transport</keyword>
<keyword id="KW-0830">Ubiquinone</keyword>